<sequence>MIRFEHVSKAYLGGRQALQGVTFHMQPGEMAFLTGHSGAGKSTLLKLICGIERPSAGKIWFSGHDITRLKNREVPFLRRQIGMIFQDHHLLMDRTVYDNVAIPLIIAGASGDDIRRRVSAALDKVGLLDKAKNFPIQLSGGEQQRVGIARAVVNKPAVLLADEPTGNLDDALSEGILRLFEEFNRVGVTVLMATHDINLISRRSYRMLTLSDGHLHGGVGHE</sequence>
<proteinExistence type="inferred from homology"/>
<dbReference type="EMBL" id="AE005674">
    <property type="protein sequence ID" value="AAN44940.2"/>
    <property type="molecule type" value="Genomic_DNA"/>
</dbReference>
<dbReference type="EMBL" id="AE014073">
    <property type="protein sequence ID" value="AAP19242.1"/>
    <property type="molecule type" value="Genomic_DNA"/>
</dbReference>
<dbReference type="RefSeq" id="NP_709233.2">
    <property type="nucleotide sequence ID" value="NC_004337.2"/>
</dbReference>
<dbReference type="RefSeq" id="WP_000617723.1">
    <property type="nucleotide sequence ID" value="NZ_WPGW01000010.1"/>
</dbReference>
<dbReference type="SMR" id="P0A9S0"/>
<dbReference type="STRING" id="198214.SF3481"/>
<dbReference type="PaxDb" id="198214-SF3481"/>
<dbReference type="GeneID" id="1026428"/>
<dbReference type="GeneID" id="86862141"/>
<dbReference type="KEGG" id="sfl:SF3481"/>
<dbReference type="KEGG" id="sfx:S4282"/>
<dbReference type="PATRIC" id="fig|198214.7.peg.4102"/>
<dbReference type="HOGENOM" id="CLU_000604_1_22_6"/>
<dbReference type="Proteomes" id="UP000001006">
    <property type="component" value="Chromosome"/>
</dbReference>
<dbReference type="Proteomes" id="UP000002673">
    <property type="component" value="Chromosome"/>
</dbReference>
<dbReference type="GO" id="GO:0005886">
    <property type="term" value="C:plasma membrane"/>
    <property type="evidence" value="ECO:0007669"/>
    <property type="project" value="UniProtKB-SubCell"/>
</dbReference>
<dbReference type="GO" id="GO:0005524">
    <property type="term" value="F:ATP binding"/>
    <property type="evidence" value="ECO:0007669"/>
    <property type="project" value="UniProtKB-KW"/>
</dbReference>
<dbReference type="GO" id="GO:0016887">
    <property type="term" value="F:ATP hydrolysis activity"/>
    <property type="evidence" value="ECO:0007669"/>
    <property type="project" value="InterPro"/>
</dbReference>
<dbReference type="GO" id="GO:0022857">
    <property type="term" value="F:transmembrane transporter activity"/>
    <property type="evidence" value="ECO:0007669"/>
    <property type="project" value="TreeGrafter"/>
</dbReference>
<dbReference type="GO" id="GO:0051301">
    <property type="term" value="P:cell division"/>
    <property type="evidence" value="ECO:0007669"/>
    <property type="project" value="UniProtKB-KW"/>
</dbReference>
<dbReference type="FunFam" id="3.40.50.300:FF:000056">
    <property type="entry name" value="Cell division ATP-binding protein FtsE"/>
    <property type="match status" value="1"/>
</dbReference>
<dbReference type="Gene3D" id="3.40.50.300">
    <property type="entry name" value="P-loop containing nucleotide triphosphate hydrolases"/>
    <property type="match status" value="1"/>
</dbReference>
<dbReference type="InterPro" id="IPR003593">
    <property type="entry name" value="AAA+_ATPase"/>
</dbReference>
<dbReference type="InterPro" id="IPR003439">
    <property type="entry name" value="ABC_transporter-like_ATP-bd"/>
</dbReference>
<dbReference type="InterPro" id="IPR017871">
    <property type="entry name" value="ABC_transporter-like_CS"/>
</dbReference>
<dbReference type="InterPro" id="IPR015854">
    <property type="entry name" value="ABC_transpr_LolD-like"/>
</dbReference>
<dbReference type="InterPro" id="IPR005286">
    <property type="entry name" value="Cell_div_FtsE"/>
</dbReference>
<dbReference type="InterPro" id="IPR027417">
    <property type="entry name" value="P-loop_NTPase"/>
</dbReference>
<dbReference type="NCBIfam" id="TIGR02673">
    <property type="entry name" value="FtsE"/>
    <property type="match status" value="1"/>
</dbReference>
<dbReference type="PANTHER" id="PTHR24220:SF470">
    <property type="entry name" value="CELL DIVISION ATP-BINDING PROTEIN FTSE"/>
    <property type="match status" value="1"/>
</dbReference>
<dbReference type="PANTHER" id="PTHR24220">
    <property type="entry name" value="IMPORT ATP-BINDING PROTEIN"/>
    <property type="match status" value="1"/>
</dbReference>
<dbReference type="Pfam" id="PF00005">
    <property type="entry name" value="ABC_tran"/>
    <property type="match status" value="1"/>
</dbReference>
<dbReference type="SMART" id="SM00382">
    <property type="entry name" value="AAA"/>
    <property type="match status" value="1"/>
</dbReference>
<dbReference type="SUPFAM" id="SSF52540">
    <property type="entry name" value="P-loop containing nucleoside triphosphate hydrolases"/>
    <property type="match status" value="1"/>
</dbReference>
<dbReference type="PROSITE" id="PS00211">
    <property type="entry name" value="ABC_TRANSPORTER_1"/>
    <property type="match status" value="1"/>
</dbReference>
<dbReference type="PROSITE" id="PS50893">
    <property type="entry name" value="ABC_TRANSPORTER_2"/>
    <property type="match status" value="1"/>
</dbReference>
<comment type="function">
    <text evidence="1">Part of the ABC transporter FtsEX involved in cellular division. Important for assembly or stability of the septal ring.</text>
</comment>
<comment type="subunit">
    <text evidence="1">Homodimer. Forms a membrane-associated complex with FtsX.</text>
</comment>
<comment type="subcellular location">
    <subcellularLocation>
        <location evidence="1">Cell inner membrane</location>
        <topology evidence="1">Peripheral membrane protein</topology>
        <orientation evidence="1">Cytoplasmic side</orientation>
    </subcellularLocation>
    <text evidence="1">Associated with the membrane through an interaction with FtsX.</text>
</comment>
<comment type="similarity">
    <text evidence="3">Belongs to the ABC transporter superfamily.</text>
</comment>
<evidence type="ECO:0000250" key="1">
    <source>
        <dbReference type="UniProtKB" id="P0A9R7"/>
    </source>
</evidence>
<evidence type="ECO:0000255" key="2">
    <source>
        <dbReference type="PROSITE-ProRule" id="PRU00434"/>
    </source>
</evidence>
<evidence type="ECO:0000305" key="3"/>
<feature type="chain" id="PRO_0000092332" description="Cell division ATP-binding protein FtsE">
    <location>
        <begin position="1"/>
        <end position="222"/>
    </location>
</feature>
<feature type="domain" description="ABC transporter" evidence="2">
    <location>
        <begin position="2"/>
        <end position="222"/>
    </location>
</feature>
<feature type="binding site" evidence="2">
    <location>
        <begin position="35"/>
        <end position="42"/>
    </location>
    <ligand>
        <name>ATP</name>
        <dbReference type="ChEBI" id="CHEBI:30616"/>
    </ligand>
</feature>
<keyword id="KW-0067">ATP-binding</keyword>
<keyword id="KW-0131">Cell cycle</keyword>
<keyword id="KW-0132">Cell division</keyword>
<keyword id="KW-0997">Cell inner membrane</keyword>
<keyword id="KW-1003">Cell membrane</keyword>
<keyword id="KW-0472">Membrane</keyword>
<keyword id="KW-0547">Nucleotide-binding</keyword>
<keyword id="KW-1185">Reference proteome</keyword>
<accession>P0A9S0</accession>
<accession>P10115</accession>
<reference key="1">
    <citation type="journal article" date="2002" name="Nucleic Acids Res.">
        <title>Genome sequence of Shigella flexneri 2a: insights into pathogenicity through comparison with genomes of Escherichia coli K12 and O157.</title>
        <authorList>
            <person name="Jin Q."/>
            <person name="Yuan Z."/>
            <person name="Xu J."/>
            <person name="Wang Y."/>
            <person name="Shen Y."/>
            <person name="Lu W."/>
            <person name="Wang J."/>
            <person name="Liu H."/>
            <person name="Yang J."/>
            <person name="Yang F."/>
            <person name="Zhang X."/>
            <person name="Zhang J."/>
            <person name="Yang G."/>
            <person name="Wu H."/>
            <person name="Qu D."/>
            <person name="Dong J."/>
            <person name="Sun L."/>
            <person name="Xue Y."/>
            <person name="Zhao A."/>
            <person name="Gao Y."/>
            <person name="Zhu J."/>
            <person name="Kan B."/>
            <person name="Ding K."/>
            <person name="Chen S."/>
            <person name="Cheng H."/>
            <person name="Yao Z."/>
            <person name="He B."/>
            <person name="Chen R."/>
            <person name="Ma D."/>
            <person name="Qiang B."/>
            <person name="Wen Y."/>
            <person name="Hou Y."/>
            <person name="Yu J."/>
        </authorList>
    </citation>
    <scope>NUCLEOTIDE SEQUENCE [LARGE SCALE GENOMIC DNA]</scope>
    <source>
        <strain>301 / Serotype 2a</strain>
    </source>
</reference>
<reference key="2">
    <citation type="journal article" date="2003" name="Infect. Immun.">
        <title>Complete genome sequence and comparative genomics of Shigella flexneri serotype 2a strain 2457T.</title>
        <authorList>
            <person name="Wei J."/>
            <person name="Goldberg M.B."/>
            <person name="Burland V."/>
            <person name="Venkatesan M.M."/>
            <person name="Deng W."/>
            <person name="Fournier G."/>
            <person name="Mayhew G.F."/>
            <person name="Plunkett G. III"/>
            <person name="Rose D.J."/>
            <person name="Darling A."/>
            <person name="Mau B."/>
            <person name="Perna N.T."/>
            <person name="Payne S.M."/>
            <person name="Runyen-Janecky L.J."/>
            <person name="Zhou S."/>
            <person name="Schwartz D.C."/>
            <person name="Blattner F.R."/>
        </authorList>
    </citation>
    <scope>NUCLEOTIDE SEQUENCE [LARGE SCALE GENOMIC DNA]</scope>
    <source>
        <strain>ATCC 700930 / 2457T / Serotype 2a</strain>
    </source>
</reference>
<protein>
    <recommendedName>
        <fullName>Cell division ATP-binding protein FtsE</fullName>
    </recommendedName>
</protein>
<name>FTSE_SHIFL</name>
<gene>
    <name type="primary">ftsE</name>
    <name type="ordered locus">SF3481</name>
    <name type="ordered locus">S4282</name>
</gene>
<organism>
    <name type="scientific">Shigella flexneri</name>
    <dbReference type="NCBI Taxonomy" id="623"/>
    <lineage>
        <taxon>Bacteria</taxon>
        <taxon>Pseudomonadati</taxon>
        <taxon>Pseudomonadota</taxon>
        <taxon>Gammaproteobacteria</taxon>
        <taxon>Enterobacterales</taxon>
        <taxon>Enterobacteriaceae</taxon>
        <taxon>Shigella</taxon>
    </lineage>
</organism>